<organism>
    <name type="scientific">Schizosaccharomyces pombe (strain 972 / ATCC 24843)</name>
    <name type="common">Fission yeast</name>
    <dbReference type="NCBI Taxonomy" id="284812"/>
    <lineage>
        <taxon>Eukaryota</taxon>
        <taxon>Fungi</taxon>
        <taxon>Dikarya</taxon>
        <taxon>Ascomycota</taxon>
        <taxon>Taphrinomycotina</taxon>
        <taxon>Schizosaccharomycetes</taxon>
        <taxon>Schizosaccharomycetales</taxon>
        <taxon>Schizosaccharomycetaceae</taxon>
        <taxon>Schizosaccharomyces</taxon>
    </lineage>
</organism>
<proteinExistence type="inferred from homology"/>
<accession>P0CT41</accession>
<accession>Q05654</accession>
<accession>Q96TJ6</accession>
<name>TF212_SCHPO</name>
<protein>
    <recommendedName>
        <fullName>Transposon Tf2-12 polyprotein</fullName>
    </recommendedName>
    <alternativeName>
        <fullName>Retrotransposable element Tf2 155 kDa protein</fullName>
    </alternativeName>
</protein>
<dbReference type="EMBL" id="CU329672">
    <property type="protein sequence ID" value="CAB60245.1"/>
    <property type="molecule type" value="Genomic_DNA"/>
</dbReference>
<dbReference type="PIR" id="T38401">
    <property type="entry name" value="T38401"/>
</dbReference>
<dbReference type="RefSeq" id="NP_587955.1">
    <property type="nucleotide sequence ID" value="NM_001022946.1"/>
</dbReference>
<dbReference type="SMR" id="P0CT41"/>
<dbReference type="FunCoup" id="P0CT41">
    <property type="interactions" value="2"/>
</dbReference>
<dbReference type="STRING" id="284812.P0CT41"/>
<dbReference type="MEROPS" id="A02.051"/>
<dbReference type="PaxDb" id="4896-SPAC27E2.08.1"/>
<dbReference type="EnsemblFungi" id="SPAC27E2.08.1">
    <property type="protein sequence ID" value="SPAC27E2.08.1:pep"/>
    <property type="gene ID" value="SPAC27E2.08"/>
</dbReference>
<dbReference type="EnsemblFungi" id="SPAC2E1P3.03c.1">
    <property type="protein sequence ID" value="SPAC2E1P3.03c.1:pep"/>
    <property type="gene ID" value="SPAC2E1P3.03c"/>
</dbReference>
<dbReference type="EnsemblFungi" id="SPAPB15E9.03c.1">
    <property type="protein sequence ID" value="SPAPB15E9.03c.1:pep"/>
    <property type="gene ID" value="SPAPB15E9.03c"/>
</dbReference>
<dbReference type="EnsemblFungi" id="SPCC1020.14.1">
    <property type="protein sequence ID" value="SPCC1020.14.1:pep"/>
    <property type="gene ID" value="SPCC1020.14"/>
</dbReference>
<dbReference type="GeneID" id="2538755"/>
<dbReference type="KEGG" id="spo:2538755"/>
<dbReference type="KEGG" id="spo:2541833"/>
<dbReference type="KEGG" id="spo:2541991"/>
<dbReference type="KEGG" id="spo:3361422"/>
<dbReference type="PomBase" id="SPCC1020.14">
    <property type="gene designation" value="Tf2-12"/>
</dbReference>
<dbReference type="VEuPathDB" id="FungiDB:SPAC27E2.08"/>
<dbReference type="VEuPathDB" id="FungiDB:SPAC2E1P3.03c"/>
<dbReference type="VEuPathDB" id="FungiDB:SPAPB15E9.03c"/>
<dbReference type="VEuPathDB" id="FungiDB:SPCC1020.14"/>
<dbReference type="eggNOG" id="KOG0017">
    <property type="taxonomic scope" value="Eukaryota"/>
</dbReference>
<dbReference type="HOGENOM" id="CLU_000384_4_0_1"/>
<dbReference type="InParanoid" id="P0CT41"/>
<dbReference type="OMA" id="RRIHATF"/>
<dbReference type="PRO" id="PR:P0CT41"/>
<dbReference type="Proteomes" id="UP000002485">
    <property type="component" value="Chromosome III"/>
</dbReference>
<dbReference type="GO" id="GO:0005634">
    <property type="term" value="C:nucleus"/>
    <property type="evidence" value="ECO:0007669"/>
    <property type="project" value="UniProtKB-ARBA"/>
</dbReference>
<dbReference type="GO" id="GO:0004190">
    <property type="term" value="F:aspartic-type endopeptidase activity"/>
    <property type="evidence" value="ECO:0007669"/>
    <property type="project" value="UniProtKB-KW"/>
</dbReference>
<dbReference type="GO" id="GO:0003677">
    <property type="term" value="F:DNA binding"/>
    <property type="evidence" value="ECO:0007669"/>
    <property type="project" value="UniProtKB-KW"/>
</dbReference>
<dbReference type="GO" id="GO:0003887">
    <property type="term" value="F:DNA-directed DNA polymerase activity"/>
    <property type="evidence" value="ECO:0007669"/>
    <property type="project" value="UniProtKB-KW"/>
</dbReference>
<dbReference type="GO" id="GO:0004519">
    <property type="term" value="F:endonuclease activity"/>
    <property type="evidence" value="ECO:0007669"/>
    <property type="project" value="UniProtKB-KW"/>
</dbReference>
<dbReference type="GO" id="GO:0046872">
    <property type="term" value="F:metal ion binding"/>
    <property type="evidence" value="ECO:0007669"/>
    <property type="project" value="UniProtKB-KW"/>
</dbReference>
<dbReference type="GO" id="GO:0003723">
    <property type="term" value="F:RNA binding"/>
    <property type="evidence" value="ECO:0007669"/>
    <property type="project" value="UniProtKB-KW"/>
</dbReference>
<dbReference type="GO" id="GO:0003964">
    <property type="term" value="F:RNA-directed DNA polymerase activity"/>
    <property type="evidence" value="ECO:0007669"/>
    <property type="project" value="UniProtKB-KW"/>
</dbReference>
<dbReference type="GO" id="GO:0015074">
    <property type="term" value="P:DNA integration"/>
    <property type="evidence" value="ECO:0007669"/>
    <property type="project" value="UniProtKB-KW"/>
</dbReference>
<dbReference type="GO" id="GO:0006310">
    <property type="term" value="P:DNA recombination"/>
    <property type="evidence" value="ECO:0007669"/>
    <property type="project" value="UniProtKB-KW"/>
</dbReference>
<dbReference type="GO" id="GO:0006508">
    <property type="term" value="P:proteolysis"/>
    <property type="evidence" value="ECO:0007669"/>
    <property type="project" value="UniProtKB-KW"/>
</dbReference>
<dbReference type="CDD" id="cd00303">
    <property type="entry name" value="retropepsin_like"/>
    <property type="match status" value="1"/>
</dbReference>
<dbReference type="CDD" id="cd09274">
    <property type="entry name" value="RNase_HI_RT_Ty3"/>
    <property type="match status" value="1"/>
</dbReference>
<dbReference type="CDD" id="cd01647">
    <property type="entry name" value="RT_LTR"/>
    <property type="match status" value="1"/>
</dbReference>
<dbReference type="FunFam" id="3.10.20.370:FF:000003">
    <property type="entry name" value="Transposon Tf2-6 polyprotein"/>
    <property type="match status" value="1"/>
</dbReference>
<dbReference type="FunFam" id="3.30.70.270:FF:000045">
    <property type="entry name" value="Transposon Tf2-7 polyprotein"/>
    <property type="match status" value="1"/>
</dbReference>
<dbReference type="Gene3D" id="1.10.340.70">
    <property type="match status" value="1"/>
</dbReference>
<dbReference type="Gene3D" id="3.10.20.370">
    <property type="match status" value="1"/>
</dbReference>
<dbReference type="Gene3D" id="3.30.70.270">
    <property type="match status" value="2"/>
</dbReference>
<dbReference type="Gene3D" id="2.40.70.10">
    <property type="entry name" value="Acid Proteases"/>
    <property type="match status" value="1"/>
</dbReference>
<dbReference type="Gene3D" id="3.10.10.10">
    <property type="entry name" value="HIV Type 1 Reverse Transcriptase, subunit A, domain 1"/>
    <property type="match status" value="1"/>
</dbReference>
<dbReference type="Gene3D" id="3.30.420.10">
    <property type="entry name" value="Ribonuclease H-like superfamily/Ribonuclease H"/>
    <property type="match status" value="1"/>
</dbReference>
<dbReference type="InterPro" id="IPR001969">
    <property type="entry name" value="Aspartic_peptidase_AS"/>
</dbReference>
<dbReference type="InterPro" id="IPR043502">
    <property type="entry name" value="DNA/RNA_pol_sf"/>
</dbReference>
<dbReference type="InterPro" id="IPR001584">
    <property type="entry name" value="Integrase_cat-core"/>
</dbReference>
<dbReference type="InterPro" id="IPR041588">
    <property type="entry name" value="Integrase_H2C2"/>
</dbReference>
<dbReference type="InterPro" id="IPR021109">
    <property type="entry name" value="Peptidase_aspartic_dom_sf"/>
</dbReference>
<dbReference type="InterPro" id="IPR050951">
    <property type="entry name" value="Retrovirus_Pol_polyprotein"/>
</dbReference>
<dbReference type="InterPro" id="IPR043128">
    <property type="entry name" value="Rev_trsase/Diguanyl_cyclase"/>
</dbReference>
<dbReference type="InterPro" id="IPR012337">
    <property type="entry name" value="RNaseH-like_sf"/>
</dbReference>
<dbReference type="InterPro" id="IPR036397">
    <property type="entry name" value="RNaseH_sf"/>
</dbReference>
<dbReference type="InterPro" id="IPR000477">
    <property type="entry name" value="RT_dom"/>
</dbReference>
<dbReference type="InterPro" id="IPR041577">
    <property type="entry name" value="RT_RNaseH_2"/>
</dbReference>
<dbReference type="InterPro" id="IPR056924">
    <property type="entry name" value="SH3_Tf2-1"/>
</dbReference>
<dbReference type="InterPro" id="IPR056930">
    <property type="entry name" value="Tf2-1-like_C"/>
</dbReference>
<dbReference type="InterPro" id="IPR024648">
    <property type="entry name" value="Tf2-1-like_dom"/>
</dbReference>
<dbReference type="PANTHER" id="PTHR37984">
    <property type="entry name" value="PROTEIN CBG26694"/>
    <property type="match status" value="1"/>
</dbReference>
<dbReference type="PANTHER" id="PTHR37984:SF5">
    <property type="entry name" value="PROTEIN NYNRIN-LIKE"/>
    <property type="match status" value="1"/>
</dbReference>
<dbReference type="Pfam" id="PF17921">
    <property type="entry name" value="Integrase_H2C2"/>
    <property type="match status" value="1"/>
</dbReference>
<dbReference type="Pfam" id="PF12382">
    <property type="entry name" value="Peptidase_A2_2"/>
    <property type="match status" value="1"/>
</dbReference>
<dbReference type="Pfam" id="PF17919">
    <property type="entry name" value="RT_RNaseH_2"/>
    <property type="match status" value="1"/>
</dbReference>
<dbReference type="Pfam" id="PF00665">
    <property type="entry name" value="rve"/>
    <property type="match status" value="1"/>
</dbReference>
<dbReference type="Pfam" id="PF00078">
    <property type="entry name" value="RVT_1"/>
    <property type="match status" value="1"/>
</dbReference>
<dbReference type="Pfam" id="PF24626">
    <property type="entry name" value="SH3_Tf2-1"/>
    <property type="match status" value="1"/>
</dbReference>
<dbReference type="Pfam" id="PF24614">
    <property type="entry name" value="Tf2-1_C"/>
    <property type="match status" value="1"/>
</dbReference>
<dbReference type="SUPFAM" id="SSF50630">
    <property type="entry name" value="Acid proteases"/>
    <property type="match status" value="1"/>
</dbReference>
<dbReference type="SUPFAM" id="SSF56672">
    <property type="entry name" value="DNA/RNA polymerases"/>
    <property type="match status" value="1"/>
</dbReference>
<dbReference type="SUPFAM" id="SSF53098">
    <property type="entry name" value="Ribonuclease H-like"/>
    <property type="match status" value="1"/>
</dbReference>
<dbReference type="PROSITE" id="PS00141">
    <property type="entry name" value="ASP_PROTEASE"/>
    <property type="match status" value="1"/>
</dbReference>
<dbReference type="PROSITE" id="PS50994">
    <property type="entry name" value="INTEGRASE"/>
    <property type="match status" value="1"/>
</dbReference>
<dbReference type="PROSITE" id="PS50878">
    <property type="entry name" value="RT_POL"/>
    <property type="match status" value="1"/>
</dbReference>
<keyword id="KW-0064">Aspartyl protease</keyword>
<keyword id="KW-0229">DNA integration</keyword>
<keyword id="KW-0233">DNA recombination</keyword>
<keyword id="KW-0238">DNA-binding</keyword>
<keyword id="KW-0239">DNA-directed DNA polymerase</keyword>
<keyword id="KW-0255">Endonuclease</keyword>
<keyword id="KW-0378">Hydrolase</keyword>
<keyword id="KW-0460">Magnesium</keyword>
<keyword id="KW-0479">Metal-binding</keyword>
<keyword id="KW-0511">Multifunctional enzyme</keyword>
<keyword id="KW-0540">Nuclease</keyword>
<keyword id="KW-0548">Nucleotidyltransferase</keyword>
<keyword id="KW-0645">Protease</keyword>
<keyword id="KW-1185">Reference proteome</keyword>
<keyword id="KW-0694">RNA-binding</keyword>
<keyword id="KW-0695">RNA-directed DNA polymerase</keyword>
<keyword id="KW-0808">Transferase</keyword>
<keyword id="KW-0814">Transposable element</keyword>
<feature type="chain" id="PRO_0000424430" description="Transposon Tf2-12 polyprotein">
    <location>
        <begin position="1"/>
        <end position="1333"/>
    </location>
</feature>
<feature type="domain" description="Peptidase A2">
    <location>
        <begin position="266"/>
        <end position="342"/>
    </location>
</feature>
<feature type="domain" description="Reverse transcriptase" evidence="2">
    <location>
        <begin position="436"/>
        <end position="615"/>
    </location>
</feature>
<feature type="domain" description="Integrase catalytic" evidence="3">
    <location>
        <begin position="979"/>
        <end position="1138"/>
    </location>
</feature>
<feature type="region of interest" description="Disordered" evidence="5">
    <location>
        <begin position="199"/>
        <end position="231"/>
    </location>
</feature>
<feature type="compositionally biased region" description="Polar residues" evidence="5">
    <location>
        <begin position="218"/>
        <end position="231"/>
    </location>
</feature>
<feature type="active site" description="For protease activity" evidence="4">
    <location>
        <position position="271"/>
    </location>
</feature>
<feature type="binding site" evidence="1">
    <location>
        <position position="502"/>
    </location>
    <ligand>
        <name>Mg(2+)</name>
        <dbReference type="ChEBI" id="CHEBI:18420"/>
        <label>1</label>
        <note>catalytic; for reverse transcriptase activity</note>
    </ligand>
</feature>
<feature type="binding site" evidence="1">
    <location>
        <position position="566"/>
    </location>
    <ligand>
        <name>Mg(2+)</name>
        <dbReference type="ChEBI" id="CHEBI:18420"/>
        <label>1</label>
        <note>catalytic; for reverse transcriptase activity</note>
    </ligand>
</feature>
<feature type="binding site" evidence="1">
    <location>
        <position position="567"/>
    </location>
    <ligand>
        <name>Mg(2+)</name>
        <dbReference type="ChEBI" id="CHEBI:18420"/>
        <label>1</label>
        <note>catalytic; for reverse transcriptase activity</note>
    </ligand>
</feature>
<feature type="binding site" evidence="1">
    <location>
        <position position="990"/>
    </location>
    <ligand>
        <name>Mg(2+)</name>
        <dbReference type="ChEBI" id="CHEBI:18420"/>
        <label>2</label>
        <note>catalytic; for integrase activity</note>
    </ligand>
</feature>
<feature type="binding site" evidence="1">
    <location>
        <position position="1050"/>
    </location>
    <ligand>
        <name>Mg(2+)</name>
        <dbReference type="ChEBI" id="CHEBI:18420"/>
        <label>2</label>
        <note>catalytic; for integrase activity</note>
    </ligand>
</feature>
<comment type="PTM">
    <text evidence="1">Processing of the polyproteins proceeds by an ordered pathway, called maturation. It involves the initial cleavage of a 27 kDa capsid protein (CA) from the N-terminus of the polyprotein, followed by the cleavage of a 56 kDa integrase (IN) from the C-terminus. This leaves a 72 kDa protease-reverse transcriptase fusion protein (PR-RT), which does not seem to be processed further (By similarity).</text>
</comment>
<comment type="miscellaneous">
    <text>Retrotransposons are mobile genetic entities that are able to replicate via an RNA intermediate and a reverse transcription step. In contrast to retroviruses, retrotransposons are non-infectious, lack an envelope and remain intracellular. Tf2 retrotransposons belong to the gypsy-like elements (metaviridae).</text>
</comment>
<reference key="1">
    <citation type="journal article" date="2002" name="Nature">
        <title>The genome sequence of Schizosaccharomyces pombe.</title>
        <authorList>
            <person name="Wood V."/>
            <person name="Gwilliam R."/>
            <person name="Rajandream M.A."/>
            <person name="Lyne M.H."/>
            <person name="Lyne R."/>
            <person name="Stewart A."/>
            <person name="Sgouros J.G."/>
            <person name="Peat N."/>
            <person name="Hayles J."/>
            <person name="Baker S.G."/>
            <person name="Basham D."/>
            <person name="Bowman S."/>
            <person name="Brooks K."/>
            <person name="Brown D."/>
            <person name="Brown S."/>
            <person name="Chillingworth T."/>
            <person name="Churcher C.M."/>
            <person name="Collins M."/>
            <person name="Connor R."/>
            <person name="Cronin A."/>
            <person name="Davis P."/>
            <person name="Feltwell T."/>
            <person name="Fraser A."/>
            <person name="Gentles S."/>
            <person name="Goble A."/>
            <person name="Hamlin N."/>
            <person name="Harris D.E."/>
            <person name="Hidalgo J."/>
            <person name="Hodgson G."/>
            <person name="Holroyd S."/>
            <person name="Hornsby T."/>
            <person name="Howarth S."/>
            <person name="Huckle E.J."/>
            <person name="Hunt S."/>
            <person name="Jagels K."/>
            <person name="James K.D."/>
            <person name="Jones L."/>
            <person name="Jones M."/>
            <person name="Leather S."/>
            <person name="McDonald S."/>
            <person name="McLean J."/>
            <person name="Mooney P."/>
            <person name="Moule S."/>
            <person name="Mungall K.L."/>
            <person name="Murphy L.D."/>
            <person name="Niblett D."/>
            <person name="Odell C."/>
            <person name="Oliver K."/>
            <person name="O'Neil S."/>
            <person name="Pearson D."/>
            <person name="Quail M.A."/>
            <person name="Rabbinowitsch E."/>
            <person name="Rutherford K.M."/>
            <person name="Rutter S."/>
            <person name="Saunders D."/>
            <person name="Seeger K."/>
            <person name="Sharp S."/>
            <person name="Skelton J."/>
            <person name="Simmonds M.N."/>
            <person name="Squares R."/>
            <person name="Squares S."/>
            <person name="Stevens K."/>
            <person name="Taylor K."/>
            <person name="Taylor R.G."/>
            <person name="Tivey A."/>
            <person name="Walsh S.V."/>
            <person name="Warren T."/>
            <person name="Whitehead S."/>
            <person name="Woodward J.R."/>
            <person name="Volckaert G."/>
            <person name="Aert R."/>
            <person name="Robben J."/>
            <person name="Grymonprez B."/>
            <person name="Weltjens I."/>
            <person name="Vanstreels E."/>
            <person name="Rieger M."/>
            <person name="Schaefer M."/>
            <person name="Mueller-Auer S."/>
            <person name="Gabel C."/>
            <person name="Fuchs M."/>
            <person name="Duesterhoeft A."/>
            <person name="Fritzc C."/>
            <person name="Holzer E."/>
            <person name="Moestl D."/>
            <person name="Hilbert H."/>
            <person name="Borzym K."/>
            <person name="Langer I."/>
            <person name="Beck A."/>
            <person name="Lehrach H."/>
            <person name="Reinhardt R."/>
            <person name="Pohl T.M."/>
            <person name="Eger P."/>
            <person name="Zimmermann W."/>
            <person name="Wedler H."/>
            <person name="Wambutt R."/>
            <person name="Purnelle B."/>
            <person name="Goffeau A."/>
            <person name="Cadieu E."/>
            <person name="Dreano S."/>
            <person name="Gloux S."/>
            <person name="Lelaure V."/>
            <person name="Mottier S."/>
            <person name="Galibert F."/>
            <person name="Aves S.J."/>
            <person name="Xiang Z."/>
            <person name="Hunt C."/>
            <person name="Moore K."/>
            <person name="Hurst S.M."/>
            <person name="Lucas M."/>
            <person name="Rochet M."/>
            <person name="Gaillardin C."/>
            <person name="Tallada V.A."/>
            <person name="Garzon A."/>
            <person name="Thode G."/>
            <person name="Daga R.R."/>
            <person name="Cruzado L."/>
            <person name="Jimenez J."/>
            <person name="Sanchez M."/>
            <person name="del Rey F."/>
            <person name="Benito J."/>
            <person name="Dominguez A."/>
            <person name="Revuelta J.L."/>
            <person name="Moreno S."/>
            <person name="Armstrong J."/>
            <person name="Forsburg S.L."/>
            <person name="Cerutti L."/>
            <person name="Lowe T."/>
            <person name="McCombie W.R."/>
            <person name="Paulsen I."/>
            <person name="Potashkin J."/>
            <person name="Shpakovski G.V."/>
            <person name="Ussery D."/>
            <person name="Barrell B.G."/>
            <person name="Nurse P."/>
        </authorList>
    </citation>
    <scope>NUCLEOTIDE SEQUENCE [LARGE SCALE GENOMIC DNA]</scope>
    <source>
        <strain>972 / ATCC 24843</strain>
    </source>
</reference>
<reference key="2">
    <citation type="journal article" date="2003" name="Genome Res.">
        <title>Retrotransposons and their recognition of pol II promoters: a comprehensive survey of the transposable elements from the complete genome sequence of Schizosaccharomyces pombe.</title>
        <authorList>
            <person name="Bowen N.J."/>
            <person name="Jordan I.K."/>
            <person name="Epstein J.A."/>
            <person name="Wood V."/>
            <person name="Levin H.L."/>
        </authorList>
    </citation>
    <scope>NOMENCLATURE</scope>
</reference>
<gene>
    <name type="primary">Tf2-12</name>
    <name type="synonym">Tf2-43</name>
    <name type="ORF">SPCC1020.14</name>
</gene>
<evidence type="ECO:0000250" key="1"/>
<evidence type="ECO:0000255" key="2">
    <source>
        <dbReference type="PROSITE-ProRule" id="PRU00405"/>
    </source>
</evidence>
<evidence type="ECO:0000255" key="3">
    <source>
        <dbReference type="PROSITE-ProRule" id="PRU00457"/>
    </source>
</evidence>
<evidence type="ECO:0000255" key="4">
    <source>
        <dbReference type="PROSITE-ProRule" id="PRU10094"/>
    </source>
</evidence>
<evidence type="ECO:0000256" key="5">
    <source>
        <dbReference type="SAM" id="MobiDB-lite"/>
    </source>
</evidence>
<sequence length="1333" mass="154916">MSYANYRYMKARAKRWRPENLDGIQTSDEHLINLFAKILSKHVPEIGKFDPNKDVESYISKLDQHFTEYPSLFPNEHTKRQYTLNHLEELEQQFAERMFSENGSLTWQELLRQTGKVQGSNKGDRLTKTFEGFRNQLDKVQFIRKLMSKANVDDFHTRLFILWMLPYSLRKLKERNYWKSEISEIYDFLEDKRTASYGKTHKRFQPQNKNLGKESLSKKNNTTNSRNLRKTNVSRIEYSSNKFLNHTRKRYEMVLQAELPDFKCSIPCLIDTGAQANIITEETVRAHKLPTRPWSKSVIYGGVYPNKINRKTIKLNISLNGISIKTEFLVVKKFSHPAAISFTTLYDNNIEISSSKHTLSQMNKVSNIVKEPELPDIYKEFKDITAETNTEKLPKPIKGLEFEVELTQENYRLPIRNYPLPPGKMQAMNDEINQGLKSGIIRESKAINACPVMFVPKKEGTLRMVVDYKPLNKYVKPNIYPLPLIEQLLAKIQGSTIFTKLDLKSAYHLIRVRKGDEHKLAFRCPRGVFEYLVMPYGISTAPAHFQYFINTILGEAKESHVVCYMDDILIHSKSESEHVKHVKDVLQKLKNANLIINQAKCEFHQSQVKFIGYHISEKGFTPCQENIDKVLQWKQPKNRKELRQFLGSVNYLRKFIPKTSQLTHPLNNLLKKDVRWKWTPTQTQAIENIKQCLVSPPVLRHFDFSKKILLETDASDVAVGAVLSQKHDDDKYYPVGYYSAKMSKAQLNYSVSDKEMLAIIKSLKHWRHYLESTIEPFKILTDHRNLIGRITNESEPENKRLARWQLFLQDFNFEINYRPGSANHIADALSRIVDETEPIPKDSEDNSINFVNQISITDDFKNQVVTEYTNDTKLLNLLNNEDKRVEENIQLKDGLLINSKDQILLPNDTQLTRTIIKKYHEEGKLIHPGIELLTNIILRRFTWKGIRKQIQEYVQNCHTCQINKSRNHKPYGPLQPIPPSERPWESLSMDFITALPESSGYNALFVVVDRFSKMAILVPCTKSITAEQTARMFDQRVIAYFGNPKEIIADNDHIFTSQTWKDFAHKYNFVMKFSLPYRPQTDGQTERTNQTVEKLLRCVCSTHPNTWVDHISLVQQSYNNAIHSATQMTPFEIVHRYSPALSPLELPSFSDKTDENSQETIQVFQTVKEHLNTNNIKMKKYFDMKIQEIEEFQPGDLVMVKRTKTGFLHKSNKLAPSFAGPFYVLQKSGPNNYELDLPDSIKHMFSSTFHVSHLEKYRHNSELNYATIDESDIGTILHILEHKNREQVLYLNVKYISNLNPSTIMSGWTTLATALQADKAIVNDYIKNNNLNI</sequence>